<feature type="transit peptide" description="Chloroplast" evidence="1">
    <location>
        <begin position="1"/>
        <end position="57"/>
    </location>
</feature>
<feature type="chain" id="PRO_0000031555" description="Ribulose bisphosphate carboxylase small subunit, chloroplastic 6" evidence="1">
    <location>
        <begin position="58"/>
        <end position="181"/>
    </location>
</feature>
<keyword id="KW-0113">Calvin cycle</keyword>
<keyword id="KW-0120">Carbon dioxide fixation</keyword>
<keyword id="KW-0150">Chloroplast</keyword>
<keyword id="KW-0601">Photorespiration</keyword>
<keyword id="KW-0602">Photosynthesis</keyword>
<keyword id="KW-0934">Plastid</keyword>
<keyword id="KW-1185">Reference proteome</keyword>
<keyword id="KW-0809">Transit peptide</keyword>
<comment type="function">
    <text evidence="1">RuBisCO catalyzes two reactions: the carboxylation of D-ribulose 1,5-bisphosphate, the primary event in carbon dioxide fixation, as well as the oxidative fragmentation of the pentose substrate. Both reactions occur simultaneously and in competition at the same active site. Although the small subunit is not catalytic it is essential for maximal activity.</text>
</comment>
<comment type="subunit">
    <text evidence="1">Heterohexadecamer of 8 large and 8 small subunits.</text>
</comment>
<comment type="subcellular location">
    <subcellularLocation>
        <location evidence="1">Plastid</location>
        <location evidence="1">Chloroplast</location>
    </subcellularLocation>
</comment>
<comment type="miscellaneous">
    <text evidence="1">The basic functional RuBisCO is composed of a large chain homodimer in a 'head-to-tail' conformation. In form I RuBisCO this homodimer is arranged in a barrel-like tetramer with the small subunits forming a tetrameric 'cap' on each end of the 'barrel'.</text>
</comment>
<comment type="similarity">
    <text evidence="1">Belongs to the RuBisCO small chain family.</text>
</comment>
<sequence>MASSIVSSAAVATRSNVAQASMVAPFTGLKSAASFPVTKKNNNVDITSLASNGGRVRCMQVWPPINMKKYETLSYLPDLSDEQLLKEVEYLLKNGWVPCLEFETEHGFVYRENHKSPGYYDGRYWTMWKLPMFGCTDATQVLAEVQEAKKAYPQAWIRIIGFDNVRQVQCISFIAYKPEGY</sequence>
<name>RBS6_SOLTU</name>
<organism>
    <name type="scientific">Solanum tuberosum</name>
    <name type="common">Potato</name>
    <dbReference type="NCBI Taxonomy" id="4113"/>
    <lineage>
        <taxon>Eukaryota</taxon>
        <taxon>Viridiplantae</taxon>
        <taxon>Streptophyta</taxon>
        <taxon>Embryophyta</taxon>
        <taxon>Tracheophyta</taxon>
        <taxon>Spermatophyta</taxon>
        <taxon>Magnoliopsida</taxon>
        <taxon>eudicotyledons</taxon>
        <taxon>Gunneridae</taxon>
        <taxon>Pentapetalae</taxon>
        <taxon>asterids</taxon>
        <taxon>lamiids</taxon>
        <taxon>Solanales</taxon>
        <taxon>Solanaceae</taxon>
        <taxon>Solanoideae</taxon>
        <taxon>Solaneae</taxon>
        <taxon>Solanum</taxon>
    </lineage>
</organism>
<gene>
    <name evidence="1" type="primary">RBCS6</name>
    <name type="synonym">RBCS-3</name>
</gene>
<protein>
    <recommendedName>
        <fullName evidence="1">Ribulose bisphosphate carboxylase small subunit, chloroplastic 6</fullName>
        <shortName evidence="1">RuBisCO small subunit 6</shortName>
    </recommendedName>
    <alternativeName>
        <fullName>Ribulose bisphosphate carboxylase small chain 3, chloroplastic</fullName>
        <shortName>RuBisCO small subunit 3</shortName>
    </alternativeName>
</protein>
<reference key="1">
    <citation type="journal article" date="1993" name="Gene">
        <title>The gene family encoding the ribulose-(1,5)-bisphosphate carboxylase/oxygenase (RuBisCO) small subunit of potato.</title>
        <authorList>
            <person name="Fritz C.C."/>
            <person name="Wolter F.P."/>
            <person name="Schenkemeyer V."/>
            <person name="Herget T."/>
            <person name="Schreier P.H."/>
        </authorList>
    </citation>
    <scope>NUCLEOTIDE SEQUENCE [GENOMIC DNA]</scope>
    <source>
        <strain>cv. AM 80.5793</strain>
    </source>
</reference>
<dbReference type="EMBL" id="X69763">
    <property type="protein sequence ID" value="CAA49417.1"/>
    <property type="molecule type" value="Genomic_DNA"/>
</dbReference>
<dbReference type="PIR" id="S31498">
    <property type="entry name" value="S31498"/>
</dbReference>
<dbReference type="SMR" id="P32764"/>
<dbReference type="FunCoup" id="P32764">
    <property type="interactions" value="1469"/>
</dbReference>
<dbReference type="STRING" id="4113.P32764"/>
<dbReference type="InParanoid" id="P32764"/>
<dbReference type="Proteomes" id="UP000011115">
    <property type="component" value="Unassembled WGS sequence"/>
</dbReference>
<dbReference type="ExpressionAtlas" id="P32764">
    <property type="expression patterns" value="baseline and differential"/>
</dbReference>
<dbReference type="GO" id="GO:0009507">
    <property type="term" value="C:chloroplast"/>
    <property type="evidence" value="ECO:0007669"/>
    <property type="project" value="UniProtKB-SubCell"/>
</dbReference>
<dbReference type="GO" id="GO:0016984">
    <property type="term" value="F:ribulose-bisphosphate carboxylase activity"/>
    <property type="evidence" value="ECO:0007669"/>
    <property type="project" value="UniProtKB-UniRule"/>
</dbReference>
<dbReference type="GO" id="GO:0009853">
    <property type="term" value="P:photorespiration"/>
    <property type="evidence" value="ECO:0007669"/>
    <property type="project" value="UniProtKB-KW"/>
</dbReference>
<dbReference type="GO" id="GO:0019253">
    <property type="term" value="P:reductive pentose-phosphate cycle"/>
    <property type="evidence" value="ECO:0007669"/>
    <property type="project" value="UniProtKB-UniRule"/>
</dbReference>
<dbReference type="CDD" id="cd03527">
    <property type="entry name" value="RuBisCO_small"/>
    <property type="match status" value="1"/>
</dbReference>
<dbReference type="FunFam" id="3.30.190.10:FF:000001">
    <property type="entry name" value="Ribulose bisphosphate carboxylase small chain, chloroplastic"/>
    <property type="match status" value="1"/>
</dbReference>
<dbReference type="Gene3D" id="3.30.190.10">
    <property type="entry name" value="Ribulose bisphosphate carboxylase, small subunit"/>
    <property type="match status" value="1"/>
</dbReference>
<dbReference type="HAMAP" id="MF_00859">
    <property type="entry name" value="RuBisCO_S_bact"/>
    <property type="match status" value="1"/>
</dbReference>
<dbReference type="InterPro" id="IPR024681">
    <property type="entry name" value="RuBisCO_ssu"/>
</dbReference>
<dbReference type="InterPro" id="IPR000894">
    <property type="entry name" value="RuBisCO_ssu_dom"/>
</dbReference>
<dbReference type="InterPro" id="IPR024680">
    <property type="entry name" value="RuBisCO_ssu_N"/>
</dbReference>
<dbReference type="InterPro" id="IPR036385">
    <property type="entry name" value="RuBisCO_ssu_sf"/>
</dbReference>
<dbReference type="PANTHER" id="PTHR31262">
    <property type="entry name" value="RIBULOSE BISPHOSPHATE CARBOXYLASE SMALL CHAIN 1, CHLOROPLASTIC"/>
    <property type="match status" value="1"/>
</dbReference>
<dbReference type="PANTHER" id="PTHR31262:SF14">
    <property type="entry name" value="RIBULOSE BISPHOSPHATE CARBOXYLASE SMALL SUBUNIT, CHLOROPLASTIC 1"/>
    <property type="match status" value="1"/>
</dbReference>
<dbReference type="Pfam" id="PF12338">
    <property type="entry name" value="RbcS"/>
    <property type="match status" value="1"/>
</dbReference>
<dbReference type="Pfam" id="PF00101">
    <property type="entry name" value="RuBisCO_small"/>
    <property type="match status" value="1"/>
</dbReference>
<dbReference type="PRINTS" id="PR00152">
    <property type="entry name" value="RUBISCOSMALL"/>
</dbReference>
<dbReference type="SMART" id="SM00961">
    <property type="entry name" value="RuBisCO_small"/>
    <property type="match status" value="1"/>
</dbReference>
<dbReference type="SUPFAM" id="SSF55239">
    <property type="entry name" value="RuBisCO, small subunit"/>
    <property type="match status" value="1"/>
</dbReference>
<accession>P32764</accession>
<evidence type="ECO:0000255" key="1">
    <source>
        <dbReference type="HAMAP-Rule" id="MF_00860"/>
    </source>
</evidence>
<proteinExistence type="inferred from homology"/>